<dbReference type="EMBL" id="S68589">
    <property type="protein sequence ID" value="AAC60681.1"/>
    <property type="molecule type" value="mRNA"/>
</dbReference>
<dbReference type="EMBL" id="S68987">
    <property type="protein sequence ID" value="AAC60682.1"/>
    <property type="molecule type" value="mRNA"/>
</dbReference>
<dbReference type="EMBL" id="AY325137">
    <property type="protein sequence ID" value="AAP92538.1"/>
    <property type="molecule type" value="mRNA"/>
</dbReference>
<dbReference type="RefSeq" id="NP_001012522.1">
    <property type="nucleotide sequence ID" value="NM_001012504.1"/>
</dbReference>
<dbReference type="RefSeq" id="NP_001386908.1">
    <molecule id="Q63945-1"/>
    <property type="nucleotide sequence ID" value="NM_001399979.1"/>
</dbReference>
<dbReference type="RefSeq" id="NP_001386909.1">
    <molecule id="Q63945-2"/>
    <property type="nucleotide sequence ID" value="NM_001399980.1"/>
</dbReference>
<dbReference type="RefSeq" id="XP_038962705.1">
    <molecule id="Q63945-1"/>
    <property type="nucleotide sequence ID" value="XM_039106777.2"/>
</dbReference>
<dbReference type="RefSeq" id="XP_038962706.1">
    <molecule id="Q63945-1"/>
    <property type="nucleotide sequence ID" value="XM_039106778.2"/>
</dbReference>
<dbReference type="SMR" id="Q63945"/>
<dbReference type="BioGRID" id="258860">
    <property type="interactions" value="2"/>
</dbReference>
<dbReference type="FunCoup" id="Q63945">
    <property type="interactions" value="4398"/>
</dbReference>
<dbReference type="IntAct" id="Q63945">
    <property type="interactions" value="3"/>
</dbReference>
<dbReference type="MINT" id="Q63945"/>
<dbReference type="STRING" id="10116.ENSRNOP00000039454"/>
<dbReference type="iPTMnet" id="Q63945"/>
<dbReference type="PhosphoSitePlus" id="Q63945"/>
<dbReference type="jPOST" id="Q63945"/>
<dbReference type="PaxDb" id="10116-ENSRNOP00000039454"/>
<dbReference type="Ensembl" id="ENSRNOT00000102290.1">
    <molecule id="Q63945-2"/>
    <property type="protein sequence ID" value="ENSRNOP00000077721.1"/>
    <property type="gene ID" value="ENSRNOG00000025892.7"/>
</dbReference>
<dbReference type="GeneID" id="120101889"/>
<dbReference type="GeneID" id="307947"/>
<dbReference type="KEGG" id="rno:307947"/>
<dbReference type="UCSC" id="RGD:1307467">
    <molecule id="Q63945-1"/>
    <property type="organism name" value="rat"/>
</dbReference>
<dbReference type="AGR" id="RGD:1307467"/>
<dbReference type="AGR" id="RGD:41368318"/>
<dbReference type="CTD" id="646817"/>
<dbReference type="RGD" id="1307467">
    <property type="gene designation" value="Set"/>
</dbReference>
<dbReference type="VEuPathDB" id="HostDB:ENSRNOG00000025892"/>
<dbReference type="eggNOG" id="KOG1508">
    <property type="taxonomic scope" value="Eukaryota"/>
</dbReference>
<dbReference type="GeneTree" id="ENSGT00940000161818"/>
<dbReference type="HOGENOM" id="CLU_051687_4_0_1"/>
<dbReference type="InParanoid" id="Q63945"/>
<dbReference type="OrthoDB" id="68938at9989"/>
<dbReference type="PhylomeDB" id="Q63945"/>
<dbReference type="TreeFam" id="TF313386"/>
<dbReference type="Reactome" id="R-RNO-2299718">
    <property type="pathway name" value="Condensation of Prophase Chromosomes"/>
</dbReference>
<dbReference type="Reactome" id="R-RNO-450520">
    <property type="pathway name" value="HuR (ELAVL1) binds and stabilizes mRNA"/>
</dbReference>
<dbReference type="PRO" id="PR:Q63945"/>
<dbReference type="Proteomes" id="UP000002494">
    <property type="component" value="Chromosome 3"/>
</dbReference>
<dbReference type="Bgee" id="ENSRNOG00000025892">
    <property type="expression patterns" value="Expressed in ovary and 19 other cell types or tissues"/>
</dbReference>
<dbReference type="ExpressionAtlas" id="Q63945">
    <property type="expression patterns" value="baseline and differential"/>
</dbReference>
<dbReference type="GO" id="GO:0000785">
    <property type="term" value="C:chromatin"/>
    <property type="evidence" value="ECO:0000318"/>
    <property type="project" value="GO_Central"/>
</dbReference>
<dbReference type="GO" id="GO:0005737">
    <property type="term" value="C:cytoplasm"/>
    <property type="evidence" value="ECO:0000250"/>
    <property type="project" value="UniProtKB"/>
</dbReference>
<dbReference type="GO" id="GO:0005829">
    <property type="term" value="C:cytosol"/>
    <property type="evidence" value="ECO:0007669"/>
    <property type="project" value="UniProtKB-SubCell"/>
</dbReference>
<dbReference type="GO" id="GO:0005783">
    <property type="term" value="C:endoplasmic reticulum"/>
    <property type="evidence" value="ECO:0000250"/>
    <property type="project" value="UniProtKB"/>
</dbReference>
<dbReference type="GO" id="GO:0005654">
    <property type="term" value="C:nucleoplasm"/>
    <property type="evidence" value="ECO:0007669"/>
    <property type="project" value="UniProtKB-SubCell"/>
</dbReference>
<dbReference type="GO" id="GO:0005634">
    <property type="term" value="C:nucleus"/>
    <property type="evidence" value="ECO:0000266"/>
    <property type="project" value="RGD"/>
</dbReference>
<dbReference type="GO" id="GO:0048471">
    <property type="term" value="C:perinuclear region of cytoplasm"/>
    <property type="evidence" value="ECO:0000250"/>
    <property type="project" value="UniProtKB"/>
</dbReference>
<dbReference type="GO" id="GO:0003682">
    <property type="term" value="F:chromatin binding"/>
    <property type="evidence" value="ECO:0000266"/>
    <property type="project" value="RGD"/>
</dbReference>
<dbReference type="GO" id="GO:0003677">
    <property type="term" value="F:DNA binding"/>
    <property type="evidence" value="ECO:0007669"/>
    <property type="project" value="UniProtKB-KW"/>
</dbReference>
<dbReference type="GO" id="GO:0042393">
    <property type="term" value="F:histone binding"/>
    <property type="evidence" value="ECO:0000318"/>
    <property type="project" value="GO_Central"/>
</dbReference>
<dbReference type="GO" id="GO:0045446">
    <property type="term" value="P:endothelial cell differentiation"/>
    <property type="evidence" value="ECO:0000266"/>
    <property type="project" value="RGD"/>
</dbReference>
<dbReference type="GO" id="GO:0006334">
    <property type="term" value="P:nucleosome assembly"/>
    <property type="evidence" value="ECO:0007669"/>
    <property type="project" value="InterPro"/>
</dbReference>
<dbReference type="GO" id="GO:0045944">
    <property type="term" value="P:positive regulation of transcription by RNA polymerase II"/>
    <property type="evidence" value="ECO:0000266"/>
    <property type="project" value="RGD"/>
</dbReference>
<dbReference type="FunFam" id="1.20.5.1500:FF:000003">
    <property type="entry name" value="SET isoform 2"/>
    <property type="match status" value="1"/>
</dbReference>
<dbReference type="FunFam" id="3.30.1120.90:FF:000002">
    <property type="entry name" value="Testis-specific Y-encoded-like protein 2"/>
    <property type="match status" value="1"/>
</dbReference>
<dbReference type="Gene3D" id="1.20.5.1500">
    <property type="match status" value="1"/>
</dbReference>
<dbReference type="Gene3D" id="3.30.1120.90">
    <property type="entry name" value="Nucleosome assembly protein"/>
    <property type="match status" value="1"/>
</dbReference>
<dbReference type="InterPro" id="IPR037231">
    <property type="entry name" value="NAP-like_sf"/>
</dbReference>
<dbReference type="InterPro" id="IPR002164">
    <property type="entry name" value="NAP_family"/>
</dbReference>
<dbReference type="PANTHER" id="PTHR11875">
    <property type="entry name" value="TESTIS-SPECIFIC Y-ENCODED PROTEIN"/>
    <property type="match status" value="1"/>
</dbReference>
<dbReference type="Pfam" id="PF00956">
    <property type="entry name" value="NAP"/>
    <property type="match status" value="1"/>
</dbReference>
<dbReference type="SUPFAM" id="SSF143113">
    <property type="entry name" value="NAP-like"/>
    <property type="match status" value="1"/>
</dbReference>
<feature type="initiator methionine" description="Removed" evidence="3">
    <location>
        <position position="1"/>
    </location>
</feature>
<feature type="chain" id="PRO_0000185664" description="Protein SET">
    <location>
        <begin position="2"/>
        <end position="289"/>
    </location>
</feature>
<feature type="region of interest" description="Disordered" evidence="4">
    <location>
        <begin position="1"/>
        <end position="42"/>
    </location>
</feature>
<feature type="region of interest" description="Dimerization" evidence="1">
    <location>
        <begin position="31"/>
        <end position="77"/>
    </location>
</feature>
<feature type="region of interest" description="Earmuff domain" evidence="1">
    <location>
        <begin position="78"/>
        <end position="224"/>
    </location>
</feature>
<feature type="region of interest" description="Disordered" evidence="4">
    <location>
        <begin position="157"/>
        <end position="206"/>
    </location>
</feature>
<feature type="region of interest" description="Disordered" evidence="4">
    <location>
        <begin position="235"/>
        <end position="289"/>
    </location>
</feature>
<feature type="compositionally biased region" description="Basic and acidic residues" evidence="4">
    <location>
        <begin position="168"/>
        <end position="180"/>
    </location>
</feature>
<feature type="compositionally biased region" description="Acidic residues" evidence="4">
    <location>
        <begin position="236"/>
        <end position="289"/>
    </location>
</feature>
<feature type="modified residue" description="N,N,N-trimethylalanine" evidence="3">
    <location>
        <position position="2"/>
    </location>
</feature>
<feature type="modified residue" description="Phosphoserine" evidence="2">
    <location>
        <position position="7"/>
    </location>
</feature>
<feature type="modified residue" description="N6-acetyllysine" evidence="3">
    <location>
        <position position="23"/>
    </location>
</feature>
<feature type="modified residue" description="Phosphoserine" evidence="2">
    <location>
        <position position="28"/>
    </location>
</feature>
<feature type="modified residue" description="Phosphoserine" evidence="2">
    <location>
        <position position="62"/>
    </location>
</feature>
<feature type="modified residue" description="N6-acetyllysine" evidence="3">
    <location>
        <position position="67"/>
    </location>
</feature>
<feature type="modified residue" description="Phosphotyrosine" evidence="3">
    <location>
        <position position="145"/>
    </location>
</feature>
<feature type="modified residue" description="N6-acetyllysine" evidence="2">
    <location>
        <position position="149"/>
    </location>
</feature>
<feature type="modified residue" description="N6-acetyllysine" evidence="2">
    <location>
        <position position="171"/>
    </location>
</feature>
<feature type="cross-link" description="Glycyl lysine isopeptide (Lys-Gly) (interchain with G-Cter in ubiquitin)" evidence="2">
    <location>
        <position position="153"/>
    </location>
</feature>
<feature type="splice variant" id="VSP_050443" description="In isoform 2." evidence="6">
    <original>MAPKRQSAILPQPKKPRPVAAPKLEDKSASPGLPKG</original>
    <variation>MSAPTAKASKKELNSNHDGADETS</variation>
    <location>
        <begin position="1"/>
        <end position="36"/>
    </location>
</feature>
<feature type="sequence conflict" description="In Ref. 2; AAP92538." evidence="7" ref="2">
    <original>A</original>
    <variation>T</variation>
    <location>
        <position position="88"/>
    </location>
</feature>
<feature type="sequence conflict" description="In Ref. 2; AAP92538." evidence="7" ref="2">
    <original>R</original>
    <variation>C</variation>
    <location>
        <position position="181"/>
    </location>
</feature>
<feature type="sequence conflict" description="In Ref. 2; AAP92538." evidence="7" ref="2">
    <original>D</original>
    <variation>N</variation>
    <location>
        <position position="273"/>
    </location>
</feature>
<feature type="modified residue" description="N6-acetyllysine" evidence="7">
    <location sequence="Q63945-2">
        <position position="11"/>
    </location>
</feature>
<feature type="modified residue" description="Phosphoserine" evidence="7">
    <location sequence="Q63945-2">
        <position position="15"/>
    </location>
</feature>
<feature type="modified residue" description="Phosphoserine" evidence="7">
    <location sequence="Q63945-2">
        <position position="24"/>
    </location>
</feature>
<evidence type="ECO:0000250" key="1"/>
<evidence type="ECO:0000250" key="2">
    <source>
        <dbReference type="UniProtKB" id="Q01105"/>
    </source>
</evidence>
<evidence type="ECO:0000250" key="3">
    <source>
        <dbReference type="UniProtKB" id="Q9EQU5"/>
    </source>
</evidence>
<evidence type="ECO:0000256" key="4">
    <source>
        <dbReference type="SAM" id="MobiDB-lite"/>
    </source>
</evidence>
<evidence type="ECO:0000269" key="5">
    <source>
    </source>
</evidence>
<evidence type="ECO:0000303" key="6">
    <source>
    </source>
</evidence>
<evidence type="ECO:0000305" key="7"/>
<protein>
    <recommendedName>
        <fullName>Protein SET</fullName>
    </recommendedName>
    <alternativeName>
        <fullName>Liver regeneration-related protein LRRGR00002</fullName>
    </alternativeName>
    <alternativeName>
        <fullName>Phosphatase 2A inhibitor I2PP2A</fullName>
        <shortName>I-2PP2A</shortName>
    </alternativeName>
    <alternativeName>
        <fullName>Template-activating factor I</fullName>
        <shortName>TAF-I</shortName>
    </alternativeName>
</protein>
<comment type="function">
    <text evidence="1">Multitasking protein, involved in apoptosis, transcription, nucleosome assembly and histone chaperoning. Isoform 2 anti-apoptotic activity is mediated by inhibition of the GZMA-activated DNase, NME1. In the course of cytotoxic T-lymphocyte (CTL)-induced apoptosis, GZMA cleaves SET, disrupting its binding to NME1 and releasing NME1 inhibition. Isoform 1 and isoform 2 are potent inhibitors of protein phosphatase 2A. Isoform 1 and isoform 2 inhibit EP300/CREBBP and PCAF-mediated acetylation of histones (HAT) and nucleosomes, most probably by masking the accessibility of lysines of histones to the acetylases. The predominant target for inhibition is histone H4. HAT inhibition leads to silencing of HAT-dependent transcription and prevents active demethylation of DNA. Both isoforms stimulate DNA replication of the adenovirus genome complexed with viral core proteins; however, isoform 2 specific activity is higher (By similarity).</text>
</comment>
<comment type="subunit">
    <text evidence="1">Headphone-shaped homodimer. Isoform 1 and isoform 2 interact directly with each other and with ANP32A within the tripartite INHAT (inhibitor of acetyltransferases) complex. Isoform 1 and isoform 2 interact also with histones. Isoform 2 is a omponent of the SET complex, composed of at least ANP32A, APEX1, HMGB2, NME1, SET and TREX1, but not NME2 or TREX2. Within this complex, directly interacts with ANP32A, NME1, HMGB2 and TREX1; the interaction with ANP32A is enhanced after cleavage. Interacts with APBB1, CHTOP, SETBP1, SGO1 (By similarity).</text>
</comment>
<comment type="subcellular location">
    <subcellularLocation>
        <location evidence="1">Cytoplasm</location>
        <location evidence="1">Cytosol</location>
    </subcellularLocation>
    <subcellularLocation>
        <location evidence="1">Endoplasmic reticulum</location>
    </subcellularLocation>
    <subcellularLocation>
        <location evidence="1">Nucleus</location>
        <location evidence="1">Nucleoplasm</location>
    </subcellularLocation>
    <text evidence="1">In the cytoplasm, found both in the cytosol and associated with the endoplasmic reticulum. The SET complex is associated with the endoplasmic reticulum. Following CTL attack and cleavage by GZMA, moves rapidly to the nucleus, where it is found in the nucleoplasm, avoiding the nucleolus. Similar translocation to the nucleus is also observed for lymphocyte-activated killer cells after the addition of calcium (By similarity).</text>
</comment>
<comment type="alternative products">
    <event type="alternative splicing"/>
    <isoform>
        <id>Q63945-1</id>
        <name>1</name>
        <name>TAF-I alpha</name>
        <sequence type="displayed"/>
    </isoform>
    <isoform>
        <id>Q63945-2</id>
        <name>2</name>
        <name>TAF-I beta</name>
        <sequence type="described" ref="VSP_050443"/>
    </isoform>
</comment>
<comment type="tissue specificity">
    <text evidence="5">Widely expressed, with higher expression in brain, thymus, spleen and bone marrow, and lower expression in heart, liver and muscle.</text>
</comment>
<comment type="developmental stage">
    <text>Higher expression in neonatal kidney than in adult. In the neonatal kidney, expressed more strongly in primitive nephrons undergoing early morphogenesis than in more developed structures. In 1-day old rat kidney, restricted to the first recognizable primitive nephron structures. Up-regulated after partial hepatectomy, with a peak after 24 hours.</text>
</comment>
<comment type="domain">
    <text evidence="1">A long alpha helix in the N-terminus mediates dimerization, while the earmuff domain is responsible for core histone and dsDNA binding. The C-terminal acidic domain mediates the inhibition of histone acetyltransferases and is required for the DNA replication stimulatory activity (By similarity).</text>
</comment>
<comment type="PTM">
    <text evidence="1">Isoform 2 is phosphorylated on Ser-15 and Ser-24.</text>
</comment>
<comment type="PTM">
    <text evidence="1">Isoform 2 is acetylated on Lys-11.</text>
</comment>
<comment type="PTM">
    <text evidence="1">Some glutamate residues are glycylated by TTLL8. This modification occurs exclusively on glutamate residues and results in a glycine chain on the gamma-carboxyl group (By similarity).</text>
</comment>
<comment type="PTM">
    <text evidence="1">N-terminus of isoform 1 is methylated by METTL11A/NTM1. Mainly trimethylated (By similarity).</text>
</comment>
<comment type="PTM">
    <molecule>Isoform 2</molecule>
    <text evidence="1">Cleaved after Lys-176 by GZMA. The cleavage inhibits its nucleosome assembly activity and disrupts the inhibition on NME1 (By similarity).</text>
</comment>
<comment type="similarity">
    <text evidence="7">Belongs to the nucleosome assembly protein (NAP) family.</text>
</comment>
<proteinExistence type="evidence at transcript level"/>
<name>SET_RAT</name>
<keyword id="KW-0007">Acetylation</keyword>
<keyword id="KW-0025">Alternative splicing</keyword>
<keyword id="KW-0143">Chaperone</keyword>
<keyword id="KW-0963">Cytoplasm</keyword>
<keyword id="KW-0238">DNA-binding</keyword>
<keyword id="KW-0256">Endoplasmic reticulum</keyword>
<keyword id="KW-1017">Isopeptide bond</keyword>
<keyword id="KW-0488">Methylation</keyword>
<keyword id="KW-0539">Nucleus</keyword>
<keyword id="KW-0597">Phosphoprotein</keyword>
<keyword id="KW-1185">Reference proteome</keyword>
<keyword id="KW-0832">Ubl conjugation</keyword>
<organism>
    <name type="scientific">Rattus norvegicus</name>
    <name type="common">Rat</name>
    <dbReference type="NCBI Taxonomy" id="10116"/>
    <lineage>
        <taxon>Eukaryota</taxon>
        <taxon>Metazoa</taxon>
        <taxon>Chordata</taxon>
        <taxon>Craniata</taxon>
        <taxon>Vertebrata</taxon>
        <taxon>Euteleostomi</taxon>
        <taxon>Mammalia</taxon>
        <taxon>Eutheria</taxon>
        <taxon>Euarchontoglires</taxon>
        <taxon>Glires</taxon>
        <taxon>Rodentia</taxon>
        <taxon>Myomorpha</taxon>
        <taxon>Muroidea</taxon>
        <taxon>Muridae</taxon>
        <taxon>Murinae</taxon>
        <taxon>Rattus</taxon>
    </lineage>
</organism>
<accession>Q63945</accession>
<accession>Q7TPA3</accession>
<reference key="1">
    <citation type="journal article" date="1994" name="Am. J. Physiol.">
        <title>Spatially restricted expression of set mRNA in developing rat kidney.</title>
        <authorList>
            <person name="Kim E.-G."/>
            <person name="Choi M.E."/>
            <person name="Ballermann B.J."/>
        </authorList>
    </citation>
    <scope>NUCLEOTIDE SEQUENCE [MRNA] (ISOFORMS 1 AND 2)</scope>
    <source>
        <tissue>Kidney</tissue>
    </source>
</reference>
<reference key="2">
    <citation type="submission" date="2003-06" db="EMBL/GenBank/DDBJ databases">
        <title>Liver regeneration after PH.</title>
        <authorList>
            <person name="Xu C.S."/>
            <person name="Li W.Q."/>
            <person name="Li Y.C."/>
            <person name="Ma H."/>
            <person name="Wang L."/>
            <person name="Wang S.F."/>
            <person name="Han H.P."/>
            <person name="Wang G.P."/>
            <person name="Chai L.Q."/>
            <person name="Yuan J.Y."/>
            <person name="Yang K.J."/>
            <person name="Yan H.M."/>
            <person name="Chang C.F."/>
            <person name="Zhao L.F."/>
            <person name="Shi J.B."/>
            <person name="Rahman S."/>
            <person name="Wang Q.N."/>
            <person name="Zhang J.B."/>
        </authorList>
    </citation>
    <scope>NUCLEOTIDE SEQUENCE [LARGE SCALE MRNA] (ISOFORM 1)</scope>
    <source>
        <tissue>Liver</tissue>
    </source>
</reference>
<reference key="3">
    <citation type="journal article" date="2000" name="Cancer Lett.">
        <title>Up-regulation of I-2PP2A/SET gene expression in rat primary hepatomas and regenerating livers.</title>
        <authorList>
            <person name="Fukukawa C."/>
            <person name="Shima H."/>
            <person name="Tamura N."/>
            <person name="Ogawa K."/>
            <person name="Kikuchi K."/>
        </authorList>
    </citation>
    <scope>TISSUE SPECIFICITY</scope>
</reference>
<gene>
    <name type="primary">Set</name>
    <name type="ORF">Ab1-115</name>
</gene>
<sequence>MAPKRQSAILPQPKKPRPVAAPKLEDKSASPGLPKGEKEQQEAIEHIDEVQNEIDRLNEQASEEILKVEQKYNKLRQPFFQKRSELIAKIPNFWVTTFVNHPQVSALLGEEDEEALHYLTRVEVTEFEDIKSGYRIDFYFDENPYFENKVLSKEFHLNESGDPSSKSTEIKWKSGKDLTKRSSQTQNKASRKRQHEEPESFFTWFTDHSDAGADELGEVIKDDIWPNPLQYYLVPDMDDEEGEAEDDDDDDEEEEGLEDIDEEGDEDEGEEDDDEDEGEEGEEDEGEDD</sequence>